<proteinExistence type="inferred from homology"/>
<protein>
    <recommendedName>
        <fullName evidence="1">Large ribosomal subunit protein bL31</fullName>
    </recommendedName>
    <alternativeName>
        <fullName evidence="2">50S ribosomal protein L31</fullName>
    </alternativeName>
</protein>
<reference key="1">
    <citation type="journal article" date="2003" name="Proc. Natl. Acad. Sci. U.S.A.">
        <title>Complete genome sequence of the marine planctomycete Pirellula sp. strain 1.</title>
        <authorList>
            <person name="Gloeckner F.O."/>
            <person name="Kube M."/>
            <person name="Bauer M."/>
            <person name="Teeling H."/>
            <person name="Lombardot T."/>
            <person name="Ludwig W."/>
            <person name="Gade D."/>
            <person name="Beck A."/>
            <person name="Borzym K."/>
            <person name="Heitmann K."/>
            <person name="Rabus R."/>
            <person name="Schlesner H."/>
            <person name="Amann R."/>
            <person name="Reinhardt R."/>
        </authorList>
    </citation>
    <scope>NUCLEOTIDE SEQUENCE [LARGE SCALE GENOMIC DNA]</scope>
    <source>
        <strain>DSM 10527 / NCIMB 13988 / SH1</strain>
    </source>
</reference>
<feature type="chain" id="PRO_0000173152" description="Large ribosomal subunit protein bL31">
    <location>
        <begin position="1"/>
        <end position="81"/>
    </location>
</feature>
<feature type="binding site" evidence="1">
    <location>
        <position position="16"/>
    </location>
    <ligand>
        <name>Zn(2+)</name>
        <dbReference type="ChEBI" id="CHEBI:29105"/>
    </ligand>
</feature>
<feature type="binding site" evidence="1">
    <location>
        <position position="18"/>
    </location>
    <ligand>
        <name>Zn(2+)</name>
        <dbReference type="ChEBI" id="CHEBI:29105"/>
    </ligand>
</feature>
<feature type="binding site" evidence="1">
    <location>
        <position position="36"/>
    </location>
    <ligand>
        <name>Zn(2+)</name>
        <dbReference type="ChEBI" id="CHEBI:29105"/>
    </ligand>
</feature>
<feature type="binding site" evidence="1">
    <location>
        <position position="39"/>
    </location>
    <ligand>
        <name>Zn(2+)</name>
        <dbReference type="ChEBI" id="CHEBI:29105"/>
    </ligand>
</feature>
<dbReference type="EMBL" id="BX294149">
    <property type="protein sequence ID" value="CAD76185.1"/>
    <property type="molecule type" value="Genomic_DNA"/>
</dbReference>
<dbReference type="RefSeq" id="NP_868808.1">
    <property type="nucleotide sequence ID" value="NC_005027.1"/>
</dbReference>
<dbReference type="RefSeq" id="WP_007328932.1">
    <property type="nucleotide sequence ID" value="NC_005027.1"/>
</dbReference>
<dbReference type="SMR" id="Q7ULT4"/>
<dbReference type="FunCoup" id="Q7ULT4">
    <property type="interactions" value="384"/>
</dbReference>
<dbReference type="STRING" id="243090.RB9304"/>
<dbReference type="EnsemblBacteria" id="CAD76185">
    <property type="protein sequence ID" value="CAD76185"/>
    <property type="gene ID" value="RB9304"/>
</dbReference>
<dbReference type="GeneID" id="90612160"/>
<dbReference type="KEGG" id="rba:RB9304"/>
<dbReference type="PATRIC" id="fig|243090.15.peg.4457"/>
<dbReference type="eggNOG" id="COG0254">
    <property type="taxonomic scope" value="Bacteria"/>
</dbReference>
<dbReference type="HOGENOM" id="CLU_114306_4_3_0"/>
<dbReference type="InParanoid" id="Q7ULT4"/>
<dbReference type="OrthoDB" id="9803251at2"/>
<dbReference type="Proteomes" id="UP000001025">
    <property type="component" value="Chromosome"/>
</dbReference>
<dbReference type="GO" id="GO:1990904">
    <property type="term" value="C:ribonucleoprotein complex"/>
    <property type="evidence" value="ECO:0007669"/>
    <property type="project" value="UniProtKB-KW"/>
</dbReference>
<dbReference type="GO" id="GO:0005840">
    <property type="term" value="C:ribosome"/>
    <property type="evidence" value="ECO:0007669"/>
    <property type="project" value="UniProtKB-KW"/>
</dbReference>
<dbReference type="GO" id="GO:0046872">
    <property type="term" value="F:metal ion binding"/>
    <property type="evidence" value="ECO:0007669"/>
    <property type="project" value="UniProtKB-KW"/>
</dbReference>
<dbReference type="GO" id="GO:0019843">
    <property type="term" value="F:rRNA binding"/>
    <property type="evidence" value="ECO:0007669"/>
    <property type="project" value="UniProtKB-KW"/>
</dbReference>
<dbReference type="GO" id="GO:0003735">
    <property type="term" value="F:structural constituent of ribosome"/>
    <property type="evidence" value="ECO:0007669"/>
    <property type="project" value="InterPro"/>
</dbReference>
<dbReference type="GO" id="GO:0006412">
    <property type="term" value="P:translation"/>
    <property type="evidence" value="ECO:0007669"/>
    <property type="project" value="UniProtKB-UniRule"/>
</dbReference>
<dbReference type="Gene3D" id="4.10.830.30">
    <property type="entry name" value="Ribosomal protein L31"/>
    <property type="match status" value="1"/>
</dbReference>
<dbReference type="HAMAP" id="MF_00501">
    <property type="entry name" value="Ribosomal_bL31_1"/>
    <property type="match status" value="1"/>
</dbReference>
<dbReference type="InterPro" id="IPR034704">
    <property type="entry name" value="Ribosomal_bL28/bL31-like_sf"/>
</dbReference>
<dbReference type="InterPro" id="IPR002150">
    <property type="entry name" value="Ribosomal_bL31"/>
</dbReference>
<dbReference type="InterPro" id="IPR027491">
    <property type="entry name" value="Ribosomal_bL31_A"/>
</dbReference>
<dbReference type="InterPro" id="IPR042105">
    <property type="entry name" value="Ribosomal_bL31_sf"/>
</dbReference>
<dbReference type="NCBIfam" id="TIGR00105">
    <property type="entry name" value="L31"/>
    <property type="match status" value="1"/>
</dbReference>
<dbReference type="NCBIfam" id="NF000612">
    <property type="entry name" value="PRK00019.1"/>
    <property type="match status" value="1"/>
</dbReference>
<dbReference type="NCBIfam" id="NF001809">
    <property type="entry name" value="PRK00528.1"/>
    <property type="match status" value="1"/>
</dbReference>
<dbReference type="PANTHER" id="PTHR33280">
    <property type="entry name" value="50S RIBOSOMAL PROTEIN L31, CHLOROPLASTIC"/>
    <property type="match status" value="1"/>
</dbReference>
<dbReference type="PANTHER" id="PTHR33280:SF1">
    <property type="entry name" value="LARGE RIBOSOMAL SUBUNIT PROTEIN BL31C"/>
    <property type="match status" value="1"/>
</dbReference>
<dbReference type="Pfam" id="PF01197">
    <property type="entry name" value="Ribosomal_L31"/>
    <property type="match status" value="1"/>
</dbReference>
<dbReference type="PRINTS" id="PR01249">
    <property type="entry name" value="RIBOSOMALL31"/>
</dbReference>
<dbReference type="SUPFAM" id="SSF143800">
    <property type="entry name" value="L28p-like"/>
    <property type="match status" value="1"/>
</dbReference>
<dbReference type="PROSITE" id="PS01143">
    <property type="entry name" value="RIBOSOMAL_L31"/>
    <property type="match status" value="1"/>
</dbReference>
<keyword id="KW-0479">Metal-binding</keyword>
<keyword id="KW-1185">Reference proteome</keyword>
<keyword id="KW-0687">Ribonucleoprotein</keyword>
<keyword id="KW-0689">Ribosomal protein</keyword>
<keyword id="KW-0694">RNA-binding</keyword>
<keyword id="KW-0699">rRNA-binding</keyword>
<keyword id="KW-0862">Zinc</keyword>
<organism>
    <name type="scientific">Rhodopirellula baltica (strain DSM 10527 / NCIMB 13988 / SH1)</name>
    <dbReference type="NCBI Taxonomy" id="243090"/>
    <lineage>
        <taxon>Bacteria</taxon>
        <taxon>Pseudomonadati</taxon>
        <taxon>Planctomycetota</taxon>
        <taxon>Planctomycetia</taxon>
        <taxon>Pirellulales</taxon>
        <taxon>Pirellulaceae</taxon>
        <taxon>Rhodopirellula</taxon>
    </lineage>
</organism>
<name>RL31_RHOBA</name>
<evidence type="ECO:0000255" key="1">
    <source>
        <dbReference type="HAMAP-Rule" id="MF_00501"/>
    </source>
</evidence>
<evidence type="ECO:0000305" key="2"/>
<sequence length="81" mass="9068">MQDGIHPNYQETSVTCGCGNTFTTRSTRPELKIDICSECHPFYTGKLKYVDTAGRIDKFQKKFAAGTYGSLQKKKAKKATK</sequence>
<accession>Q7ULT4</accession>
<comment type="function">
    <text evidence="1">Binds the 23S rRNA.</text>
</comment>
<comment type="cofactor">
    <cofactor evidence="1">
        <name>Zn(2+)</name>
        <dbReference type="ChEBI" id="CHEBI:29105"/>
    </cofactor>
    <text evidence="1">Binds 1 zinc ion per subunit.</text>
</comment>
<comment type="subunit">
    <text evidence="1">Part of the 50S ribosomal subunit.</text>
</comment>
<comment type="similarity">
    <text evidence="1">Belongs to the bacterial ribosomal protein bL31 family. Type A subfamily.</text>
</comment>
<gene>
    <name evidence="1" type="primary">rpmE</name>
    <name type="ordered locus">RB9304</name>
</gene>